<feature type="signal peptide" evidence="1">
    <location>
        <begin position="1"/>
        <end position="19"/>
    </location>
</feature>
<feature type="chain" id="PRO_0000168837" description="Penicillin-binding protein activator LpoB">
    <location>
        <begin position="20"/>
        <end position="213"/>
    </location>
</feature>
<feature type="region of interest" description="Disordered" evidence="2">
    <location>
        <begin position="28"/>
        <end position="74"/>
    </location>
</feature>
<feature type="compositionally biased region" description="Pro residues" evidence="2">
    <location>
        <begin position="36"/>
        <end position="50"/>
    </location>
</feature>
<feature type="lipid moiety-binding region" description="N-palmitoyl cysteine" evidence="1">
    <location>
        <position position="20"/>
    </location>
</feature>
<feature type="lipid moiety-binding region" description="S-diacylglycerol cysteine" evidence="1">
    <location>
        <position position="20"/>
    </location>
</feature>
<organism>
    <name type="scientific">Escherichia coli (strain K12)</name>
    <dbReference type="NCBI Taxonomy" id="83333"/>
    <lineage>
        <taxon>Bacteria</taxon>
        <taxon>Pseudomonadati</taxon>
        <taxon>Pseudomonadota</taxon>
        <taxon>Gammaproteobacteria</taxon>
        <taxon>Enterobacterales</taxon>
        <taxon>Enterobacteriaceae</taxon>
        <taxon>Escherichia</taxon>
    </lineage>
</organism>
<evidence type="ECO:0000255" key="1"/>
<evidence type="ECO:0000256" key="2">
    <source>
        <dbReference type="SAM" id="MobiDB-lite"/>
    </source>
</evidence>
<evidence type="ECO:0000269" key="3">
    <source>
    </source>
</evidence>
<evidence type="ECO:0000269" key="4">
    <source>
    </source>
</evidence>
<evidence type="ECO:0000305" key="5"/>
<gene>
    <name type="primary">lpoB</name>
    <name type="synonym">ycfM</name>
    <name type="ordered locus">b1105</name>
    <name type="ordered locus">JW5157</name>
</gene>
<protein>
    <recommendedName>
        <fullName>Penicillin-binding protein activator LpoB</fullName>
        <shortName>PBP activator LpoB</shortName>
    </recommendedName>
    <alternativeName>
        <fullName>Lipoprotein activator of PBP from the outer membrane B</fullName>
    </alternativeName>
</protein>
<sequence>MTKMSRYALITALAMFLAGCVGQREPAPVEEVKPAPEQPAEPQQPVPTVPSVPTIPQQPGPIEHEDQTAPPAPHIRHYDWNGAMQPMVSKMLGADGVTAGSVLLVDSVNNRTNGSLNAAEATETLRNALANNGKFTLVSAQQLSMAKQQLGLSPQDSLGTRSKAIGIARNVGAHYVLYSSASGNVNAPTLQMQLMLVQTGEIIWSGKGAVSQQ</sequence>
<keyword id="KW-0998">Cell outer membrane</keyword>
<keyword id="KW-0133">Cell shape</keyword>
<keyword id="KW-0449">Lipoprotein</keyword>
<keyword id="KW-0472">Membrane</keyword>
<keyword id="KW-0564">Palmitate</keyword>
<keyword id="KW-0573">Peptidoglycan synthesis</keyword>
<keyword id="KW-1185">Reference proteome</keyword>
<keyword id="KW-0732">Signal</keyword>
<dbReference type="EMBL" id="U00096">
    <property type="protein sequence ID" value="AAC74189.1"/>
    <property type="molecule type" value="Genomic_DNA"/>
</dbReference>
<dbReference type="EMBL" id="AP009048">
    <property type="protein sequence ID" value="BAA35912.2"/>
    <property type="molecule type" value="Genomic_DNA"/>
</dbReference>
<dbReference type="PIR" id="F64854">
    <property type="entry name" value="F64854"/>
</dbReference>
<dbReference type="RefSeq" id="NP_415623.1">
    <property type="nucleotide sequence ID" value="NC_000913.3"/>
</dbReference>
<dbReference type="RefSeq" id="WP_000164439.1">
    <property type="nucleotide sequence ID" value="NZ_STEB01000016.1"/>
</dbReference>
<dbReference type="BMRB" id="P0AB38"/>
<dbReference type="SMR" id="P0AB38"/>
<dbReference type="BioGRID" id="4263027">
    <property type="interactions" value="152"/>
</dbReference>
<dbReference type="BioGRID" id="852830">
    <property type="interactions" value="8"/>
</dbReference>
<dbReference type="FunCoup" id="P0AB38">
    <property type="interactions" value="106"/>
</dbReference>
<dbReference type="IntAct" id="P0AB38">
    <property type="interactions" value="10"/>
</dbReference>
<dbReference type="STRING" id="511145.b1105"/>
<dbReference type="jPOST" id="P0AB38"/>
<dbReference type="PaxDb" id="511145-b1105"/>
<dbReference type="EnsemblBacteria" id="AAC74189">
    <property type="protein sequence ID" value="AAC74189"/>
    <property type="gene ID" value="b1105"/>
</dbReference>
<dbReference type="GeneID" id="93776303"/>
<dbReference type="GeneID" id="948536"/>
<dbReference type="KEGG" id="ecj:JW5157"/>
<dbReference type="KEGG" id="eco:b1105"/>
<dbReference type="KEGG" id="ecoc:C3026_06670"/>
<dbReference type="PATRIC" id="fig|1411691.4.peg.1162"/>
<dbReference type="EchoBASE" id="EB3205"/>
<dbReference type="eggNOG" id="COG3417">
    <property type="taxonomic scope" value="Bacteria"/>
</dbReference>
<dbReference type="HOGENOM" id="CLU_092328_0_0_6"/>
<dbReference type="InParanoid" id="P0AB38"/>
<dbReference type="OMA" id="AMQPMVG"/>
<dbReference type="OrthoDB" id="6466283at2"/>
<dbReference type="PhylomeDB" id="P0AB38"/>
<dbReference type="BioCyc" id="EcoCyc:G6565-MONOMER"/>
<dbReference type="BioCyc" id="MetaCyc:G6565-MONOMER"/>
<dbReference type="PRO" id="PR:P0AB38"/>
<dbReference type="Proteomes" id="UP000000625">
    <property type="component" value="Chromosome"/>
</dbReference>
<dbReference type="GO" id="GO:0009279">
    <property type="term" value="C:cell outer membrane"/>
    <property type="evidence" value="ECO:0000314"/>
    <property type="project" value="EcoCyc"/>
</dbReference>
<dbReference type="GO" id="GO:0031241">
    <property type="term" value="C:periplasmic side of cell outer membrane"/>
    <property type="evidence" value="ECO:0000314"/>
    <property type="project" value="UniProtKB"/>
</dbReference>
<dbReference type="GO" id="GO:0008047">
    <property type="term" value="F:enzyme activator activity"/>
    <property type="evidence" value="ECO:0000314"/>
    <property type="project" value="EcoCyc"/>
</dbReference>
<dbReference type="GO" id="GO:0019899">
    <property type="term" value="F:enzyme binding"/>
    <property type="evidence" value="ECO:0000353"/>
    <property type="project" value="EcoCyc"/>
</dbReference>
<dbReference type="GO" id="GO:0030234">
    <property type="term" value="F:enzyme regulator activity"/>
    <property type="evidence" value="ECO:0000314"/>
    <property type="project" value="UniProtKB"/>
</dbReference>
<dbReference type="GO" id="GO:0009252">
    <property type="term" value="P:peptidoglycan biosynthetic process"/>
    <property type="evidence" value="ECO:0000314"/>
    <property type="project" value="UniProtKB"/>
</dbReference>
<dbReference type="GO" id="GO:0008360">
    <property type="term" value="P:regulation of cell shape"/>
    <property type="evidence" value="ECO:0007669"/>
    <property type="project" value="UniProtKB-KW"/>
</dbReference>
<dbReference type="FunFam" id="3.40.50.10610:FF:000002">
    <property type="entry name" value="Penicillin-binding protein activator LpoB"/>
    <property type="match status" value="1"/>
</dbReference>
<dbReference type="Gene3D" id="3.40.50.10610">
    <property type="entry name" value="ABC-type transport auxiliary lipoprotein component"/>
    <property type="match status" value="1"/>
</dbReference>
<dbReference type="HAMAP" id="MF_01889">
    <property type="entry name" value="LpoB"/>
    <property type="match status" value="1"/>
</dbReference>
<dbReference type="InterPro" id="IPR014094">
    <property type="entry name" value="LpoB"/>
</dbReference>
<dbReference type="NCBIfam" id="TIGR02722">
    <property type="entry name" value="lp"/>
    <property type="match status" value="1"/>
</dbReference>
<dbReference type="PANTHER" id="PTHR40593">
    <property type="entry name" value="PENICILLIN-BINDING PROTEIN ACTIVATOR LPOB"/>
    <property type="match status" value="1"/>
</dbReference>
<dbReference type="PANTHER" id="PTHR40593:SF1">
    <property type="entry name" value="PENICILLIN-BINDING PROTEIN ACTIVATOR LPOB"/>
    <property type="match status" value="1"/>
</dbReference>
<dbReference type="Pfam" id="PF13036">
    <property type="entry name" value="LpoB"/>
    <property type="match status" value="1"/>
</dbReference>
<dbReference type="PROSITE" id="PS51257">
    <property type="entry name" value="PROKAR_LIPOPROTEIN"/>
    <property type="match status" value="1"/>
</dbReference>
<proteinExistence type="evidence at protein level"/>
<comment type="function">
    <text evidence="3 4">Regulator of peptidoglycan synthesis that is essential for the function of penicillin-binding protein 1B (PBP1b). Stimulates transpeptidase and transglycosylase activities of PBP1b in vitro. May also contribute to outer membrane constriction during cell division, in complex with PBP1b.</text>
</comment>
<comment type="subunit">
    <text evidence="3 4">Interacts with PBP1b.</text>
</comment>
<comment type="interaction">
    <interactant intactId="EBI-3405489">
        <id>P0AB38</id>
    </interactant>
    <interactant intactId="EBI-909769">
        <id>P02919</id>
        <label>mrcB</label>
    </interactant>
    <organismsDiffer>false</organismsDiffer>
    <experiments>4</experiments>
</comment>
<comment type="subcellular location">
    <subcellularLocation>
        <location evidence="3 4">Cell outer membrane</location>
        <topology evidence="3 4">Lipid-anchor</topology>
        <orientation evidence="3 4">Periplasmic side</orientation>
    </subcellularLocation>
    <text>Localizes to the divisome and to the lateral wall.</text>
</comment>
<comment type="disruption phenotype">
    <text evidence="3 4">Mutant shows sensitivity to many beta-lactams. Absence of both LpoA and LpoB leads to a decrease in peptide cross-linking and to cell lysis.</text>
</comment>
<comment type="similarity">
    <text evidence="5">Belongs to the LpoB family.</text>
</comment>
<reference key="1">
    <citation type="journal article" date="1996" name="DNA Res.">
        <title>A 718-kb DNA sequence of the Escherichia coli K-12 genome corresponding to the 12.7-28.0 min region on the linkage map.</title>
        <authorList>
            <person name="Oshima T."/>
            <person name="Aiba H."/>
            <person name="Baba T."/>
            <person name="Fujita K."/>
            <person name="Hayashi K."/>
            <person name="Honjo A."/>
            <person name="Ikemoto K."/>
            <person name="Inada T."/>
            <person name="Itoh T."/>
            <person name="Kajihara M."/>
            <person name="Kanai K."/>
            <person name="Kashimoto K."/>
            <person name="Kimura S."/>
            <person name="Kitagawa M."/>
            <person name="Makino K."/>
            <person name="Masuda S."/>
            <person name="Miki T."/>
            <person name="Mizobuchi K."/>
            <person name="Mori H."/>
            <person name="Motomura K."/>
            <person name="Nakamura Y."/>
            <person name="Nashimoto H."/>
            <person name="Nishio Y."/>
            <person name="Saito N."/>
            <person name="Sampei G."/>
            <person name="Seki Y."/>
            <person name="Tagami H."/>
            <person name="Takemoto K."/>
            <person name="Wada C."/>
            <person name="Yamamoto Y."/>
            <person name="Yano M."/>
            <person name="Horiuchi T."/>
        </authorList>
    </citation>
    <scope>NUCLEOTIDE SEQUENCE [LARGE SCALE GENOMIC DNA]</scope>
    <source>
        <strain>K12 / W3110 / ATCC 27325 / DSM 5911</strain>
    </source>
</reference>
<reference key="2">
    <citation type="journal article" date="1997" name="Science">
        <title>The complete genome sequence of Escherichia coli K-12.</title>
        <authorList>
            <person name="Blattner F.R."/>
            <person name="Plunkett G. III"/>
            <person name="Bloch C.A."/>
            <person name="Perna N.T."/>
            <person name="Burland V."/>
            <person name="Riley M."/>
            <person name="Collado-Vides J."/>
            <person name="Glasner J.D."/>
            <person name="Rode C.K."/>
            <person name="Mayhew G.F."/>
            <person name="Gregor J."/>
            <person name="Davis N.W."/>
            <person name="Kirkpatrick H.A."/>
            <person name="Goeden M.A."/>
            <person name="Rose D.J."/>
            <person name="Mau B."/>
            <person name="Shao Y."/>
        </authorList>
    </citation>
    <scope>NUCLEOTIDE SEQUENCE [LARGE SCALE GENOMIC DNA]</scope>
    <source>
        <strain>K12 / MG1655 / ATCC 47076</strain>
    </source>
</reference>
<reference key="3">
    <citation type="journal article" date="2006" name="Mol. Syst. Biol.">
        <title>Highly accurate genome sequences of Escherichia coli K-12 strains MG1655 and W3110.</title>
        <authorList>
            <person name="Hayashi K."/>
            <person name="Morooka N."/>
            <person name="Yamamoto Y."/>
            <person name="Fujita K."/>
            <person name="Isono K."/>
            <person name="Choi S."/>
            <person name="Ohtsubo E."/>
            <person name="Baba T."/>
            <person name="Wanner B.L."/>
            <person name="Mori H."/>
            <person name="Horiuchi T."/>
        </authorList>
    </citation>
    <scope>NUCLEOTIDE SEQUENCE [LARGE SCALE GENOMIC DNA]</scope>
    <source>
        <strain>K12 / W3110 / ATCC 27325 / DSM 5911</strain>
    </source>
</reference>
<reference key="4">
    <citation type="journal article" date="2010" name="Cell">
        <title>Regulation of peptidoglycan synthesis by outer-membrane proteins.</title>
        <authorList>
            <person name="Typas A."/>
            <person name="Banzhaf M."/>
            <person name="van den Berg van Saparoea B."/>
            <person name="Verheul J."/>
            <person name="Biboy J."/>
            <person name="Nichols R.J."/>
            <person name="Zietek M."/>
            <person name="Beilharz K."/>
            <person name="Kannenberg K."/>
            <person name="von Rechenberg M."/>
            <person name="Breukink E."/>
            <person name="den Blaauwen T."/>
            <person name="Gross C.A."/>
            <person name="Vollmer W."/>
        </authorList>
    </citation>
    <scope>FUNCTION</scope>
    <scope>INTERACTION WITH PBP1B</scope>
    <scope>SUBCELLULAR LOCATION</scope>
    <scope>DISRUPTION PHENOTYPE</scope>
    <source>
        <strain>K12</strain>
    </source>
</reference>
<reference key="5">
    <citation type="journal article" date="2010" name="Cell">
        <title>Lipoprotein cofactors located in the outer membrane activate bacterial cell wall polymerases.</title>
        <authorList>
            <person name="Paradis-Bleau C."/>
            <person name="Markovski M."/>
            <person name="Uehara T."/>
            <person name="Lupoli T.J."/>
            <person name="Walker S."/>
            <person name="Kahne D.E."/>
            <person name="Bernhardt T.G."/>
        </authorList>
    </citation>
    <scope>FUNCTION</scope>
    <scope>INTERACTION WITH PBP1B</scope>
    <scope>SUBCELLULAR LOCATION</scope>
    <scope>DISRUPTION PHENOTYPE</scope>
    <source>
        <strain>K12 / MG1655 / ATCC 47076</strain>
    </source>
</reference>
<accession>P0AB38</accession>
<accession>P75947</accession>
<accession>Q9R424</accession>
<name>LPOB_ECOLI</name>